<gene>
    <name evidence="1" type="primary">glgC</name>
    <name type="ordered locus">SPCG_1158</name>
</gene>
<protein>
    <recommendedName>
        <fullName evidence="1">Glucose-1-phosphate adenylyltransferase</fullName>
        <ecNumber evidence="1">2.7.7.27</ecNumber>
    </recommendedName>
    <alternativeName>
        <fullName evidence="1">ADP-glucose pyrophosphorylase</fullName>
        <shortName evidence="1">ADPGlc PPase</shortName>
    </alternativeName>
    <alternativeName>
        <fullName evidence="1">ADP-glucose synthase</fullName>
    </alternativeName>
</protein>
<organism>
    <name type="scientific">Streptococcus pneumoniae (strain CGSP14)</name>
    <dbReference type="NCBI Taxonomy" id="516950"/>
    <lineage>
        <taxon>Bacteria</taxon>
        <taxon>Bacillati</taxon>
        <taxon>Bacillota</taxon>
        <taxon>Bacilli</taxon>
        <taxon>Lactobacillales</taxon>
        <taxon>Streptococcaceae</taxon>
        <taxon>Streptococcus</taxon>
    </lineage>
</organism>
<accession>B2IPY6</accession>
<comment type="function">
    <text evidence="1">Involved in the biosynthesis of ADP-glucose, a building block required for the elongation reactions to produce glycogen. Catalyzes the reaction between ATP and alpha-D-glucose 1-phosphate (G1P) to produce pyrophosphate and ADP-Glc.</text>
</comment>
<comment type="catalytic activity">
    <reaction evidence="1">
        <text>alpha-D-glucose 1-phosphate + ATP + H(+) = ADP-alpha-D-glucose + diphosphate</text>
        <dbReference type="Rhea" id="RHEA:12120"/>
        <dbReference type="ChEBI" id="CHEBI:15378"/>
        <dbReference type="ChEBI" id="CHEBI:30616"/>
        <dbReference type="ChEBI" id="CHEBI:33019"/>
        <dbReference type="ChEBI" id="CHEBI:57498"/>
        <dbReference type="ChEBI" id="CHEBI:58601"/>
        <dbReference type="EC" id="2.7.7.27"/>
    </reaction>
</comment>
<comment type="pathway">
    <text evidence="1">Glycan biosynthesis; glycogen biosynthesis.</text>
</comment>
<comment type="subunit">
    <text evidence="1">Homotetramer.</text>
</comment>
<comment type="similarity">
    <text evidence="1">Belongs to the bacterial/plant glucose-1-phosphate adenylyltransferase family.</text>
</comment>
<dbReference type="EC" id="2.7.7.27" evidence="1"/>
<dbReference type="EMBL" id="CP001033">
    <property type="protein sequence ID" value="ACB90410.1"/>
    <property type="molecule type" value="Genomic_DNA"/>
</dbReference>
<dbReference type="RefSeq" id="WP_000787245.1">
    <property type="nucleotide sequence ID" value="NC_010582.1"/>
</dbReference>
<dbReference type="SMR" id="B2IPY6"/>
<dbReference type="KEGG" id="spw:SPCG_1158"/>
<dbReference type="HOGENOM" id="CLU_029499_14_0_9"/>
<dbReference type="UniPathway" id="UPA00164"/>
<dbReference type="GO" id="GO:0005524">
    <property type="term" value="F:ATP binding"/>
    <property type="evidence" value="ECO:0007669"/>
    <property type="project" value="UniProtKB-KW"/>
</dbReference>
<dbReference type="GO" id="GO:0008878">
    <property type="term" value="F:glucose-1-phosphate adenylyltransferase activity"/>
    <property type="evidence" value="ECO:0007669"/>
    <property type="project" value="UniProtKB-UniRule"/>
</dbReference>
<dbReference type="GO" id="GO:0005978">
    <property type="term" value="P:glycogen biosynthetic process"/>
    <property type="evidence" value="ECO:0007669"/>
    <property type="project" value="UniProtKB-UniRule"/>
</dbReference>
<dbReference type="CDD" id="cd02508">
    <property type="entry name" value="ADP_Glucose_PP"/>
    <property type="match status" value="1"/>
</dbReference>
<dbReference type="CDD" id="cd04651">
    <property type="entry name" value="LbH_G1P_AT_C"/>
    <property type="match status" value="1"/>
</dbReference>
<dbReference type="Gene3D" id="2.160.10.10">
    <property type="entry name" value="Hexapeptide repeat proteins"/>
    <property type="match status" value="1"/>
</dbReference>
<dbReference type="Gene3D" id="3.90.550.10">
    <property type="entry name" value="Spore Coat Polysaccharide Biosynthesis Protein SpsA, Chain A"/>
    <property type="match status" value="1"/>
</dbReference>
<dbReference type="HAMAP" id="MF_00624">
    <property type="entry name" value="GlgC"/>
    <property type="match status" value="1"/>
</dbReference>
<dbReference type="InterPro" id="IPR011831">
    <property type="entry name" value="ADP-Glc_PPase"/>
</dbReference>
<dbReference type="InterPro" id="IPR005836">
    <property type="entry name" value="ADP_Glu_pyroP_CS"/>
</dbReference>
<dbReference type="InterPro" id="IPR023049">
    <property type="entry name" value="GlgC_bac"/>
</dbReference>
<dbReference type="InterPro" id="IPR056818">
    <property type="entry name" value="GlmU/GlgC-like_hexapep"/>
</dbReference>
<dbReference type="InterPro" id="IPR005835">
    <property type="entry name" value="NTP_transferase_dom"/>
</dbReference>
<dbReference type="InterPro" id="IPR029044">
    <property type="entry name" value="Nucleotide-diphossugar_trans"/>
</dbReference>
<dbReference type="InterPro" id="IPR011004">
    <property type="entry name" value="Trimer_LpxA-like_sf"/>
</dbReference>
<dbReference type="NCBIfam" id="TIGR02091">
    <property type="entry name" value="glgC"/>
    <property type="match status" value="1"/>
</dbReference>
<dbReference type="NCBIfam" id="NF003670">
    <property type="entry name" value="PRK05293.1"/>
    <property type="match status" value="1"/>
</dbReference>
<dbReference type="PANTHER" id="PTHR43523:SF2">
    <property type="entry name" value="GLUCOSE-1-PHOSPHATE ADENYLYLTRANSFERASE"/>
    <property type="match status" value="1"/>
</dbReference>
<dbReference type="PANTHER" id="PTHR43523">
    <property type="entry name" value="GLUCOSE-1-PHOSPHATE ADENYLYLTRANSFERASE-RELATED"/>
    <property type="match status" value="1"/>
</dbReference>
<dbReference type="Pfam" id="PF24894">
    <property type="entry name" value="Hexapep_GlmU"/>
    <property type="match status" value="1"/>
</dbReference>
<dbReference type="Pfam" id="PF00483">
    <property type="entry name" value="NTP_transferase"/>
    <property type="match status" value="1"/>
</dbReference>
<dbReference type="SUPFAM" id="SSF53448">
    <property type="entry name" value="Nucleotide-diphospho-sugar transferases"/>
    <property type="match status" value="1"/>
</dbReference>
<dbReference type="SUPFAM" id="SSF51161">
    <property type="entry name" value="Trimeric LpxA-like enzymes"/>
    <property type="match status" value="1"/>
</dbReference>
<dbReference type="PROSITE" id="PS00808">
    <property type="entry name" value="ADP_GLC_PYROPHOSPH_1"/>
    <property type="match status" value="1"/>
</dbReference>
<dbReference type="PROSITE" id="PS00809">
    <property type="entry name" value="ADP_GLC_PYROPHOSPH_2"/>
    <property type="match status" value="1"/>
</dbReference>
<dbReference type="PROSITE" id="PS00810">
    <property type="entry name" value="ADP_GLC_PYROPHOSPH_3"/>
    <property type="match status" value="1"/>
</dbReference>
<proteinExistence type="inferred from homology"/>
<reference key="1">
    <citation type="journal article" date="2009" name="BMC Genomics">
        <title>Genome evolution driven by host adaptations results in a more virulent and antimicrobial-resistant Streptococcus pneumoniae serotype 14.</title>
        <authorList>
            <person name="Ding F."/>
            <person name="Tang P."/>
            <person name="Hsu M.-H."/>
            <person name="Cui P."/>
            <person name="Hu S."/>
            <person name="Yu J."/>
            <person name="Chiu C.-H."/>
        </authorList>
    </citation>
    <scope>NUCLEOTIDE SEQUENCE [LARGE SCALE GENOMIC DNA]</scope>
    <source>
        <strain>CGSP14</strain>
    </source>
</reference>
<name>GLGC_STRPS</name>
<feature type="chain" id="PRO_1000130507" description="Glucose-1-phosphate adenylyltransferase">
    <location>
        <begin position="1"/>
        <end position="380"/>
    </location>
</feature>
<feature type="binding site" evidence="1">
    <location>
        <position position="164"/>
    </location>
    <ligand>
        <name>alpha-D-glucose 1-phosphate</name>
        <dbReference type="ChEBI" id="CHEBI:58601"/>
    </ligand>
</feature>
<feature type="binding site" evidence="1">
    <location>
        <begin position="179"/>
        <end position="180"/>
    </location>
    <ligand>
        <name>alpha-D-glucose 1-phosphate</name>
        <dbReference type="ChEBI" id="CHEBI:58601"/>
    </ligand>
</feature>
<feature type="binding site" evidence="1">
    <location>
        <position position="190"/>
    </location>
    <ligand>
        <name>alpha-D-glucose 1-phosphate</name>
        <dbReference type="ChEBI" id="CHEBI:58601"/>
    </ligand>
</feature>
<keyword id="KW-0067">ATP-binding</keyword>
<keyword id="KW-0119">Carbohydrate metabolism</keyword>
<keyword id="KW-0320">Glycogen biosynthesis</keyword>
<keyword id="KW-0321">Glycogen metabolism</keyword>
<keyword id="KW-0547">Nucleotide-binding</keyword>
<keyword id="KW-0548">Nucleotidyltransferase</keyword>
<keyword id="KW-0808">Transferase</keyword>
<sequence length="380" mass="41532">MKNEMLALILAGGQGTRLAKLTQSIAKPAVQFGGRYRIIDFALSNCANSGIHNVGVVTQYQPLALNNHIGNGSSWGLDGIDSGVSILQPYSASEGNRWFEGTSHAIYQNIDYIDSVNPEYVLILSGDHIYKMDYDDMLQSHKDNNASLTVAVLDVPLKEASRFGIMNTDANNRIVEFEEKPAQPKSTKASMGIYIFDWQRLRNMLVAAEKSKVGMSDFGKNVIPNYLELGESVYAYEFSGYWKDVGTIESLWEANMEYISPENALDSRNRQWKIYSRNLISPPNFLGANAHVEDSLVVDGCFVDGTVKHSILSTGAQVREGAEVLDSVIMSGAIIGQGAKIKRAIIGEGAIISDGVEIDGTDEVQVVGYNEVVGVATDED</sequence>
<evidence type="ECO:0000255" key="1">
    <source>
        <dbReference type="HAMAP-Rule" id="MF_00624"/>
    </source>
</evidence>